<dbReference type="EMBL" id="CU329670">
    <property type="protein sequence ID" value="CAA93814.1"/>
    <property type="molecule type" value="Genomic_DNA"/>
</dbReference>
<dbReference type="PIR" id="S67453">
    <property type="entry name" value="S67453"/>
</dbReference>
<dbReference type="RefSeq" id="NP_594336.1">
    <property type="nucleotide sequence ID" value="NM_001019757.2"/>
</dbReference>
<dbReference type="SMR" id="Q10352"/>
<dbReference type="BioGRID" id="278137">
    <property type="interactions" value="1"/>
</dbReference>
<dbReference type="FunCoup" id="Q10352">
    <property type="interactions" value="48"/>
</dbReference>
<dbReference type="STRING" id="284812.Q10352"/>
<dbReference type="iPTMnet" id="Q10352"/>
<dbReference type="PaxDb" id="4896-SPAC1F12.10c.1"/>
<dbReference type="EnsemblFungi" id="SPAC1F12.10c.1">
    <property type="protein sequence ID" value="SPAC1F12.10c.1:pep"/>
    <property type="gene ID" value="SPAC1F12.10c"/>
</dbReference>
<dbReference type="KEGG" id="spo:2541641"/>
<dbReference type="PomBase" id="SPAC1F12.10c"/>
<dbReference type="VEuPathDB" id="FungiDB:SPAC1F12.10c"/>
<dbReference type="eggNOG" id="KOG0536">
    <property type="taxonomic scope" value="Eukaryota"/>
</dbReference>
<dbReference type="HOGENOM" id="CLU_046313_2_3_1"/>
<dbReference type="InParanoid" id="Q10352"/>
<dbReference type="OMA" id="RNCFIGY"/>
<dbReference type="PhylomeDB" id="Q10352"/>
<dbReference type="PRO" id="PR:Q10352"/>
<dbReference type="Proteomes" id="UP000002485">
    <property type="component" value="Chromosome I"/>
</dbReference>
<dbReference type="GO" id="GO:0005737">
    <property type="term" value="C:cytoplasm"/>
    <property type="evidence" value="ECO:0000318"/>
    <property type="project" value="GO_Central"/>
</dbReference>
<dbReference type="GO" id="GO:0005829">
    <property type="term" value="C:cytosol"/>
    <property type="evidence" value="ECO:0007005"/>
    <property type="project" value="PomBase"/>
</dbReference>
<dbReference type="GO" id="GO:0005634">
    <property type="term" value="C:nucleus"/>
    <property type="evidence" value="ECO:0007005"/>
    <property type="project" value="PomBase"/>
</dbReference>
<dbReference type="GO" id="GO:0004128">
    <property type="term" value="F:cytochrome-b5 reductase activity, acting on NAD(P)H"/>
    <property type="evidence" value="ECO:0000318"/>
    <property type="project" value="GO_Central"/>
</dbReference>
<dbReference type="GO" id="GO:0020037">
    <property type="term" value="F:heme binding"/>
    <property type="evidence" value="ECO:0000318"/>
    <property type="project" value="GO_Central"/>
</dbReference>
<dbReference type="GO" id="GO:0046872">
    <property type="term" value="F:metal ion binding"/>
    <property type="evidence" value="ECO:0007669"/>
    <property type="project" value="UniProtKB-KW"/>
</dbReference>
<dbReference type="FunFam" id="3.10.120.10:FF:000001">
    <property type="entry name" value="Cytochrome b5 reductase 4"/>
    <property type="match status" value="1"/>
</dbReference>
<dbReference type="Gene3D" id="3.10.120.10">
    <property type="entry name" value="Cytochrome b5-like heme/steroid binding domain"/>
    <property type="match status" value="1"/>
</dbReference>
<dbReference type="InterPro" id="IPR001199">
    <property type="entry name" value="Cyt_B5-like_heme/steroid-bd"/>
</dbReference>
<dbReference type="InterPro" id="IPR036400">
    <property type="entry name" value="Cyt_B5-like_heme/steroid_sf"/>
</dbReference>
<dbReference type="InterPro" id="IPR018506">
    <property type="entry name" value="Cyt_B5_heme-BS"/>
</dbReference>
<dbReference type="InterPro" id="IPR051872">
    <property type="entry name" value="Cytochrome_b5/Flavoprotein_Rdt"/>
</dbReference>
<dbReference type="PANTHER" id="PTHR46237:SF1">
    <property type="entry name" value="CYTOCHROME B5 REDUCTASE 4"/>
    <property type="match status" value="1"/>
</dbReference>
<dbReference type="PANTHER" id="PTHR46237">
    <property type="entry name" value="CYTOCHROME B5 REDUCTASE 4 FAMILY MEMBER"/>
    <property type="match status" value="1"/>
</dbReference>
<dbReference type="Pfam" id="PF00173">
    <property type="entry name" value="Cyt-b5"/>
    <property type="match status" value="1"/>
</dbReference>
<dbReference type="SMART" id="SM01117">
    <property type="entry name" value="Cyt-b5"/>
    <property type="match status" value="1"/>
</dbReference>
<dbReference type="SUPFAM" id="SSF55856">
    <property type="entry name" value="Cytochrome b5-like heme/steroid binding domain"/>
    <property type="match status" value="1"/>
</dbReference>
<dbReference type="PROSITE" id="PS00191">
    <property type="entry name" value="CYTOCHROME_B5_1"/>
    <property type="match status" value="1"/>
</dbReference>
<dbReference type="PROSITE" id="PS50255">
    <property type="entry name" value="CYTOCHROME_B5_2"/>
    <property type="match status" value="1"/>
</dbReference>
<reference key="1">
    <citation type="journal article" date="2002" name="Nature">
        <title>The genome sequence of Schizosaccharomyces pombe.</title>
        <authorList>
            <person name="Wood V."/>
            <person name="Gwilliam R."/>
            <person name="Rajandream M.A."/>
            <person name="Lyne M.H."/>
            <person name="Lyne R."/>
            <person name="Stewart A."/>
            <person name="Sgouros J.G."/>
            <person name="Peat N."/>
            <person name="Hayles J."/>
            <person name="Baker S.G."/>
            <person name="Basham D."/>
            <person name="Bowman S."/>
            <person name="Brooks K."/>
            <person name="Brown D."/>
            <person name="Brown S."/>
            <person name="Chillingworth T."/>
            <person name="Churcher C.M."/>
            <person name="Collins M."/>
            <person name="Connor R."/>
            <person name="Cronin A."/>
            <person name="Davis P."/>
            <person name="Feltwell T."/>
            <person name="Fraser A."/>
            <person name="Gentles S."/>
            <person name="Goble A."/>
            <person name="Hamlin N."/>
            <person name="Harris D.E."/>
            <person name="Hidalgo J."/>
            <person name="Hodgson G."/>
            <person name="Holroyd S."/>
            <person name="Hornsby T."/>
            <person name="Howarth S."/>
            <person name="Huckle E.J."/>
            <person name="Hunt S."/>
            <person name="Jagels K."/>
            <person name="James K.D."/>
            <person name="Jones L."/>
            <person name="Jones M."/>
            <person name="Leather S."/>
            <person name="McDonald S."/>
            <person name="McLean J."/>
            <person name="Mooney P."/>
            <person name="Moule S."/>
            <person name="Mungall K.L."/>
            <person name="Murphy L.D."/>
            <person name="Niblett D."/>
            <person name="Odell C."/>
            <person name="Oliver K."/>
            <person name="O'Neil S."/>
            <person name="Pearson D."/>
            <person name="Quail M.A."/>
            <person name="Rabbinowitsch E."/>
            <person name="Rutherford K.M."/>
            <person name="Rutter S."/>
            <person name="Saunders D."/>
            <person name="Seeger K."/>
            <person name="Sharp S."/>
            <person name="Skelton J."/>
            <person name="Simmonds M.N."/>
            <person name="Squares R."/>
            <person name="Squares S."/>
            <person name="Stevens K."/>
            <person name="Taylor K."/>
            <person name="Taylor R.G."/>
            <person name="Tivey A."/>
            <person name="Walsh S.V."/>
            <person name="Warren T."/>
            <person name="Whitehead S."/>
            <person name="Woodward J.R."/>
            <person name="Volckaert G."/>
            <person name="Aert R."/>
            <person name="Robben J."/>
            <person name="Grymonprez B."/>
            <person name="Weltjens I."/>
            <person name="Vanstreels E."/>
            <person name="Rieger M."/>
            <person name="Schaefer M."/>
            <person name="Mueller-Auer S."/>
            <person name="Gabel C."/>
            <person name="Fuchs M."/>
            <person name="Duesterhoeft A."/>
            <person name="Fritzc C."/>
            <person name="Holzer E."/>
            <person name="Moestl D."/>
            <person name="Hilbert H."/>
            <person name="Borzym K."/>
            <person name="Langer I."/>
            <person name="Beck A."/>
            <person name="Lehrach H."/>
            <person name="Reinhardt R."/>
            <person name="Pohl T.M."/>
            <person name="Eger P."/>
            <person name="Zimmermann W."/>
            <person name="Wedler H."/>
            <person name="Wambutt R."/>
            <person name="Purnelle B."/>
            <person name="Goffeau A."/>
            <person name="Cadieu E."/>
            <person name="Dreano S."/>
            <person name="Gloux S."/>
            <person name="Lelaure V."/>
            <person name="Mottier S."/>
            <person name="Galibert F."/>
            <person name="Aves S.J."/>
            <person name="Xiang Z."/>
            <person name="Hunt C."/>
            <person name="Moore K."/>
            <person name="Hurst S.M."/>
            <person name="Lucas M."/>
            <person name="Rochet M."/>
            <person name="Gaillardin C."/>
            <person name="Tallada V.A."/>
            <person name="Garzon A."/>
            <person name="Thode G."/>
            <person name="Daga R.R."/>
            <person name="Cruzado L."/>
            <person name="Jimenez J."/>
            <person name="Sanchez M."/>
            <person name="del Rey F."/>
            <person name="Benito J."/>
            <person name="Dominguez A."/>
            <person name="Revuelta J.L."/>
            <person name="Moreno S."/>
            <person name="Armstrong J."/>
            <person name="Forsburg S.L."/>
            <person name="Cerutti L."/>
            <person name="Lowe T."/>
            <person name="McCombie W.R."/>
            <person name="Paulsen I."/>
            <person name="Potashkin J."/>
            <person name="Shpakovski G.V."/>
            <person name="Ussery D."/>
            <person name="Barrell B.G."/>
            <person name="Nurse P."/>
        </authorList>
    </citation>
    <scope>NUCLEOTIDE SEQUENCE [LARGE SCALE GENOMIC DNA]</scope>
    <source>
        <strain>972 / ATCC 24843</strain>
    </source>
</reference>
<evidence type="ECO:0000255" key="1">
    <source>
        <dbReference type="PROSITE-ProRule" id="PRU00279"/>
    </source>
</evidence>
<evidence type="ECO:0000256" key="2">
    <source>
        <dbReference type="SAM" id="MobiDB-lite"/>
    </source>
</evidence>
<evidence type="ECO:0000305" key="3"/>
<gene>
    <name type="ORF">SPAC1F12.10c</name>
</gene>
<proteinExistence type="inferred from homology"/>
<sequence length="147" mass="16667">MVALFKSSLGRPEQHQTPQIRISPASSNVEHSEKQPRRDFRVKKYVAPGFSQLNWSKLVASGQNLSGVEKPIPVTKEELAKHKTKEDCWIAIRGKVYNVSAYLPYHPAGQKRILDYAGRDATVIFMKFHAWVNEEALLKTSFVGFLV</sequence>
<name>YDAA_SCHPO</name>
<feature type="chain" id="PRO_0000166038" description="Uncharacterized protein C1F12.10c">
    <location>
        <begin position="1"/>
        <end position="147"/>
    </location>
</feature>
<feature type="domain" description="Cytochrome b5 heme-binding" evidence="1">
    <location>
        <begin position="71"/>
        <end position="147"/>
    </location>
</feature>
<feature type="region of interest" description="Disordered" evidence="2">
    <location>
        <begin position="1"/>
        <end position="37"/>
    </location>
</feature>
<feature type="compositionally biased region" description="Polar residues" evidence="2">
    <location>
        <begin position="15"/>
        <end position="29"/>
    </location>
</feature>
<feature type="binding site" description="axial binding residue" evidence="1">
    <location>
        <position position="106"/>
    </location>
    <ligand>
        <name>heme</name>
        <dbReference type="ChEBI" id="CHEBI:30413"/>
    </ligand>
    <ligandPart>
        <name>Fe</name>
        <dbReference type="ChEBI" id="CHEBI:18248"/>
    </ligandPart>
</feature>
<feature type="binding site" description="axial binding residue" evidence="1">
    <location>
        <position position="129"/>
    </location>
    <ligand>
        <name>heme</name>
        <dbReference type="ChEBI" id="CHEBI:30413"/>
    </ligand>
    <ligandPart>
        <name>Fe</name>
        <dbReference type="ChEBI" id="CHEBI:18248"/>
    </ligandPart>
</feature>
<protein>
    <recommendedName>
        <fullName>Uncharacterized protein C1F12.10c</fullName>
    </recommendedName>
</protein>
<comment type="similarity">
    <text evidence="3">Belongs to the cytochrome b5 family.</text>
</comment>
<keyword id="KW-0349">Heme</keyword>
<keyword id="KW-0408">Iron</keyword>
<keyword id="KW-0479">Metal-binding</keyword>
<keyword id="KW-1185">Reference proteome</keyword>
<organism>
    <name type="scientific">Schizosaccharomyces pombe (strain 972 / ATCC 24843)</name>
    <name type="common">Fission yeast</name>
    <dbReference type="NCBI Taxonomy" id="284812"/>
    <lineage>
        <taxon>Eukaryota</taxon>
        <taxon>Fungi</taxon>
        <taxon>Dikarya</taxon>
        <taxon>Ascomycota</taxon>
        <taxon>Taphrinomycotina</taxon>
        <taxon>Schizosaccharomycetes</taxon>
        <taxon>Schizosaccharomycetales</taxon>
        <taxon>Schizosaccharomycetaceae</taxon>
        <taxon>Schizosaccharomyces</taxon>
    </lineage>
</organism>
<accession>Q10352</accession>